<dbReference type="EC" id="3.5.1.135" evidence="2"/>
<dbReference type="EMBL" id="CP000964">
    <property type="protein sequence ID" value="ACI07272.1"/>
    <property type="molecule type" value="Genomic_DNA"/>
</dbReference>
<dbReference type="SMR" id="B5XUE4"/>
<dbReference type="KEGG" id="kpe:KPK_0770"/>
<dbReference type="HOGENOM" id="CLU_152586_0_0_6"/>
<dbReference type="BioCyc" id="KPNE507522:GI0B-770-MONOMER"/>
<dbReference type="Proteomes" id="UP000001734">
    <property type="component" value="Chromosome"/>
</dbReference>
<dbReference type="GO" id="GO:0005829">
    <property type="term" value="C:cytosol"/>
    <property type="evidence" value="ECO:0007669"/>
    <property type="project" value="TreeGrafter"/>
</dbReference>
<dbReference type="GO" id="GO:0016813">
    <property type="term" value="F:hydrolase activity, acting on carbon-nitrogen (but not peptide) bonds, in linear amidines"/>
    <property type="evidence" value="ECO:0007669"/>
    <property type="project" value="UniProtKB-UniRule"/>
</dbReference>
<dbReference type="GO" id="GO:0106251">
    <property type="term" value="F:N4-acetylcytidine amidohydrolase activity"/>
    <property type="evidence" value="ECO:0007669"/>
    <property type="project" value="RHEA"/>
</dbReference>
<dbReference type="CDD" id="cd06552">
    <property type="entry name" value="ASCH_yqfb_like"/>
    <property type="match status" value="1"/>
</dbReference>
<dbReference type="FunFam" id="2.30.130.30:FF:000001">
    <property type="entry name" value="UPF0267 protein YqfB"/>
    <property type="match status" value="1"/>
</dbReference>
<dbReference type="Gene3D" id="2.30.130.30">
    <property type="entry name" value="Hypothetical protein"/>
    <property type="match status" value="1"/>
</dbReference>
<dbReference type="HAMAP" id="MF_00684">
    <property type="entry name" value="ac4C_amidohydr"/>
    <property type="match status" value="1"/>
</dbReference>
<dbReference type="InterPro" id="IPR008314">
    <property type="entry name" value="AC4CH"/>
</dbReference>
<dbReference type="InterPro" id="IPR007374">
    <property type="entry name" value="ASCH_domain"/>
</dbReference>
<dbReference type="InterPro" id="IPR015947">
    <property type="entry name" value="PUA-like_sf"/>
</dbReference>
<dbReference type="NCBIfam" id="NF003443">
    <property type="entry name" value="PRK04980.1"/>
    <property type="match status" value="1"/>
</dbReference>
<dbReference type="PANTHER" id="PTHR38088">
    <property type="entry name" value="UCP029143 FAMILY PROTEIN"/>
    <property type="match status" value="1"/>
</dbReference>
<dbReference type="PANTHER" id="PTHR38088:SF2">
    <property type="entry name" value="UCP029143 FAMILY PROTEIN"/>
    <property type="match status" value="1"/>
</dbReference>
<dbReference type="Pfam" id="PF04266">
    <property type="entry name" value="ASCH"/>
    <property type="match status" value="1"/>
</dbReference>
<dbReference type="PIRSF" id="PIRSF029143">
    <property type="entry name" value="UCP029143"/>
    <property type="match status" value="1"/>
</dbReference>
<dbReference type="SMART" id="SM01022">
    <property type="entry name" value="ASCH"/>
    <property type="match status" value="1"/>
</dbReference>
<dbReference type="SUPFAM" id="SSF88697">
    <property type="entry name" value="PUA domain-like"/>
    <property type="match status" value="1"/>
</dbReference>
<proteinExistence type="inferred from homology"/>
<feature type="chain" id="PRO_1000131791" description="N(4)-acetylcytidine amidohydrolase">
    <location>
        <begin position="1"/>
        <end position="103"/>
    </location>
</feature>
<feature type="domain" description="ASCH" evidence="1">
    <location>
        <begin position="6"/>
        <end position="100"/>
    </location>
</feature>
<feature type="active site" description="Proton acceptor" evidence="2">
    <location>
        <position position="21"/>
    </location>
</feature>
<feature type="active site" description="Nucleophile" evidence="2">
    <location>
        <position position="24"/>
    </location>
</feature>
<feature type="active site" description="Proton donor" evidence="2">
    <location>
        <position position="74"/>
    </location>
</feature>
<name>AC4CH_KLEP3</name>
<keyword id="KW-0378">Hydrolase</keyword>
<reference key="1">
    <citation type="journal article" date="2008" name="PLoS Genet.">
        <title>Complete genome sequence of the N2-fixing broad host range endophyte Klebsiella pneumoniae 342 and virulence predictions verified in mice.</title>
        <authorList>
            <person name="Fouts D.E."/>
            <person name="Tyler H.L."/>
            <person name="DeBoy R.T."/>
            <person name="Daugherty S."/>
            <person name="Ren Q."/>
            <person name="Badger J.H."/>
            <person name="Durkin A.S."/>
            <person name="Huot H."/>
            <person name="Shrivastava S."/>
            <person name="Kothari S."/>
            <person name="Dodson R.J."/>
            <person name="Mohamoud Y."/>
            <person name="Khouri H."/>
            <person name="Roesch L.F.W."/>
            <person name="Krogfelt K.A."/>
            <person name="Struve C."/>
            <person name="Triplett E.W."/>
            <person name="Methe B.A."/>
        </authorList>
    </citation>
    <scope>NUCLEOTIDE SEQUENCE [LARGE SCALE GENOMIC DNA]</scope>
    <source>
        <strain>342</strain>
    </source>
</reference>
<accession>B5XUE4</accession>
<sequence length="103" mass="12041">MQANDITFFQRFQEDILAGRKTITIRDAAESHFKPGDVLRVGRYEDDGYFCTIAVTATSTVTLDTLTEEHARQENMTLEQLRQVIMEIYPAEDRFYVIEFKRL</sequence>
<organism>
    <name type="scientific">Klebsiella pneumoniae (strain 342)</name>
    <dbReference type="NCBI Taxonomy" id="507522"/>
    <lineage>
        <taxon>Bacteria</taxon>
        <taxon>Pseudomonadati</taxon>
        <taxon>Pseudomonadota</taxon>
        <taxon>Gammaproteobacteria</taxon>
        <taxon>Enterobacterales</taxon>
        <taxon>Enterobacteriaceae</taxon>
        <taxon>Klebsiella/Raoultella group</taxon>
        <taxon>Klebsiella</taxon>
        <taxon>Klebsiella pneumoniae complex</taxon>
    </lineage>
</organism>
<comment type="function">
    <text evidence="2">Catalyzes the hydrolysis of N(4)-acetylcytidine (ac4C).</text>
</comment>
<comment type="catalytic activity">
    <reaction evidence="2">
        <text>N(4)-acetylcytidine + H2O = cytidine + acetate + H(+)</text>
        <dbReference type="Rhea" id="RHEA:62932"/>
        <dbReference type="ChEBI" id="CHEBI:15377"/>
        <dbReference type="ChEBI" id="CHEBI:15378"/>
        <dbReference type="ChEBI" id="CHEBI:17562"/>
        <dbReference type="ChEBI" id="CHEBI:30089"/>
        <dbReference type="ChEBI" id="CHEBI:70989"/>
        <dbReference type="EC" id="3.5.1.135"/>
    </reaction>
</comment>
<comment type="catalytic activity">
    <reaction evidence="2">
        <text>N(4)-acetyl-2'-deoxycytidine + H2O = 2'-deoxycytidine + acetate + H(+)</text>
        <dbReference type="Rhea" id="RHEA:62936"/>
        <dbReference type="ChEBI" id="CHEBI:15377"/>
        <dbReference type="ChEBI" id="CHEBI:15378"/>
        <dbReference type="ChEBI" id="CHEBI:15698"/>
        <dbReference type="ChEBI" id="CHEBI:30089"/>
        <dbReference type="ChEBI" id="CHEBI:146133"/>
        <dbReference type="EC" id="3.5.1.135"/>
    </reaction>
</comment>
<comment type="catalytic activity">
    <reaction evidence="2">
        <text>N(4)-acetylcytosine + H2O = cytosine + acetate + H(+)</text>
        <dbReference type="Rhea" id="RHEA:62940"/>
        <dbReference type="ChEBI" id="CHEBI:15377"/>
        <dbReference type="ChEBI" id="CHEBI:15378"/>
        <dbReference type="ChEBI" id="CHEBI:16040"/>
        <dbReference type="ChEBI" id="CHEBI:30089"/>
        <dbReference type="ChEBI" id="CHEBI:146134"/>
        <dbReference type="EC" id="3.5.1.135"/>
    </reaction>
</comment>
<comment type="similarity">
    <text evidence="2">Belongs to the N(4)-acetylcytidine amidohydrolase family.</text>
</comment>
<gene>
    <name type="ordered locus">KPK_0770</name>
</gene>
<protein>
    <recommendedName>
        <fullName evidence="2">N(4)-acetylcytidine amidohydrolase</fullName>
        <shortName evidence="2">ac4C amidohydrolase</shortName>
        <ecNumber evidence="2">3.5.1.135</ecNumber>
    </recommendedName>
</protein>
<evidence type="ECO:0000255" key="1"/>
<evidence type="ECO:0000255" key="2">
    <source>
        <dbReference type="HAMAP-Rule" id="MF_00684"/>
    </source>
</evidence>